<organism>
    <name type="scientific">Vibrio vulnificus (strain CMCP6)</name>
    <dbReference type="NCBI Taxonomy" id="216895"/>
    <lineage>
        <taxon>Bacteria</taxon>
        <taxon>Pseudomonadati</taxon>
        <taxon>Pseudomonadota</taxon>
        <taxon>Gammaproteobacteria</taxon>
        <taxon>Vibrionales</taxon>
        <taxon>Vibrionaceae</taxon>
        <taxon>Vibrio</taxon>
    </lineage>
</organism>
<proteinExistence type="evidence at protein level"/>
<feature type="signal peptide">
    <location>
        <begin position="1"/>
        <end position="20"/>
    </location>
</feature>
<feature type="chain" id="PRO_0000013365" description="Cytolysin">
    <location>
        <begin position="21"/>
        <end position="471"/>
    </location>
</feature>
<feature type="domain" description="Ricin B-type lectin" evidence="1">
    <location>
        <begin position="338"/>
        <end position="465"/>
    </location>
</feature>
<feature type="sequence conflict" description="In Ref. 1; AAA03245." evidence="2" ref="1">
    <original>A</original>
    <variation>R</variation>
    <location>
        <position position="13"/>
    </location>
</feature>
<feature type="sequence conflict" description="In Ref. 1; AAA03245." evidence="2" ref="1">
    <original>A</original>
    <variation>R</variation>
    <location>
        <position position="338"/>
    </location>
</feature>
<feature type="sequence conflict" description="In Ref. 1; AAA03245." evidence="2" ref="1">
    <original>N</original>
    <variation>S</variation>
    <location>
        <position position="435"/>
    </location>
</feature>
<feature type="strand" evidence="3">
    <location>
        <begin position="339"/>
        <end position="347"/>
    </location>
</feature>
<feature type="strand" evidence="3">
    <location>
        <begin position="351"/>
        <end position="357"/>
    </location>
</feature>
<feature type="strand" evidence="4">
    <location>
        <begin position="360"/>
        <end position="363"/>
    </location>
</feature>
<feature type="strand" evidence="3">
    <location>
        <begin position="367"/>
        <end position="371"/>
    </location>
</feature>
<feature type="helix" evidence="3">
    <location>
        <begin position="377"/>
        <end position="379"/>
    </location>
</feature>
<feature type="strand" evidence="3">
    <location>
        <begin position="380"/>
        <end position="383"/>
    </location>
</feature>
<feature type="strand" evidence="3">
    <location>
        <begin position="389"/>
        <end position="391"/>
    </location>
</feature>
<feature type="strand" evidence="3">
    <location>
        <begin position="394"/>
        <end position="396"/>
    </location>
</feature>
<feature type="strand" evidence="3">
    <location>
        <begin position="398"/>
        <end position="401"/>
    </location>
</feature>
<feature type="strand" evidence="3">
    <location>
        <begin position="407"/>
        <end position="410"/>
    </location>
</feature>
<feature type="helix" evidence="3">
    <location>
        <begin position="416"/>
        <end position="418"/>
    </location>
</feature>
<feature type="strand" evidence="3">
    <location>
        <begin position="420"/>
        <end position="423"/>
    </location>
</feature>
<feature type="strand" evidence="3">
    <location>
        <begin position="426"/>
        <end position="429"/>
    </location>
</feature>
<feature type="strand" evidence="3">
    <location>
        <begin position="439"/>
        <end position="445"/>
    </location>
</feature>
<feature type="strand" evidence="3">
    <location>
        <begin position="448"/>
        <end position="453"/>
    </location>
</feature>
<feature type="helix" evidence="3">
    <location>
        <begin position="454"/>
        <end position="456"/>
    </location>
</feature>
<feature type="strand" evidence="3">
    <location>
        <begin position="462"/>
        <end position="466"/>
    </location>
</feature>
<dbReference type="EMBL" id="M34670">
    <property type="protein sequence ID" value="AAA03245.1"/>
    <property type="molecule type" value="Unassigned_DNA"/>
</dbReference>
<dbReference type="EMBL" id="AE016796">
    <property type="protein sequence ID" value="AAO07360.2"/>
    <property type="molecule type" value="Genomic_DNA"/>
</dbReference>
<dbReference type="PIR" id="A41478">
    <property type="entry name" value="A41478"/>
</dbReference>
<dbReference type="RefSeq" id="WP_011081361.1">
    <property type="nucleotide sequence ID" value="NC_004460.2"/>
</dbReference>
<dbReference type="PDB" id="4OWJ">
    <property type="method" value="X-ray"/>
    <property type="resolution" value="2.00 A"/>
    <property type="chains" value="A/B/C/D/E/F/G=338-471"/>
</dbReference>
<dbReference type="PDB" id="4OWK">
    <property type="method" value="X-ray"/>
    <property type="resolution" value="2.00 A"/>
    <property type="chains" value="A/B/C/D/E/F/G=338-471"/>
</dbReference>
<dbReference type="PDB" id="4OWL">
    <property type="method" value="X-ray"/>
    <property type="resolution" value="2.10 A"/>
    <property type="chains" value="A/B/C/D/E/F/G=338-471"/>
</dbReference>
<dbReference type="PDBsum" id="4OWJ"/>
<dbReference type="PDBsum" id="4OWK"/>
<dbReference type="PDBsum" id="4OWL"/>
<dbReference type="SMR" id="P19247"/>
<dbReference type="CAZy" id="CBM13">
    <property type="family name" value="Carbohydrate-Binding Module Family 13"/>
</dbReference>
<dbReference type="TCDB" id="1.C.14.1.3">
    <property type="family name" value="the cytohemolysin (chl) family"/>
</dbReference>
<dbReference type="UniLectin" id="P19247"/>
<dbReference type="KEGG" id="vvu:VV2_0404"/>
<dbReference type="HOGENOM" id="CLU_579932_0_0_6"/>
<dbReference type="EvolutionaryTrace" id="P19247"/>
<dbReference type="PHI-base" id="PHI:12035"/>
<dbReference type="PHI-base" id="PHI:6877"/>
<dbReference type="PHI-base" id="PHI:8497"/>
<dbReference type="Proteomes" id="UP000002275">
    <property type="component" value="Chromosome 2"/>
</dbReference>
<dbReference type="GO" id="GO:0005576">
    <property type="term" value="C:extracellular region"/>
    <property type="evidence" value="ECO:0007669"/>
    <property type="project" value="InterPro"/>
</dbReference>
<dbReference type="GO" id="GO:0030246">
    <property type="term" value="F:carbohydrate binding"/>
    <property type="evidence" value="ECO:0007669"/>
    <property type="project" value="UniProtKB-KW"/>
</dbReference>
<dbReference type="GO" id="GO:0090729">
    <property type="term" value="F:toxin activity"/>
    <property type="evidence" value="ECO:0007669"/>
    <property type="project" value="UniProtKB-KW"/>
</dbReference>
<dbReference type="GO" id="GO:0051715">
    <property type="term" value="P:cytolysis in another organism"/>
    <property type="evidence" value="ECO:0007669"/>
    <property type="project" value="InterPro"/>
</dbReference>
<dbReference type="CDD" id="cd23423">
    <property type="entry name" value="beta-trefoil_Ricin_hemolysin"/>
    <property type="match status" value="1"/>
</dbReference>
<dbReference type="Gene3D" id="2.80.10.50">
    <property type="match status" value="1"/>
</dbReference>
<dbReference type="Gene3D" id="2.70.240.10">
    <property type="entry name" value="Leukocidin/porin MspA"/>
    <property type="match status" value="2"/>
</dbReference>
<dbReference type="InterPro" id="IPR016183">
    <property type="entry name" value="Leukocidin/Hemolysin_toxin"/>
</dbReference>
<dbReference type="InterPro" id="IPR036435">
    <property type="entry name" value="Leukocidin/porin_MspA_sf"/>
</dbReference>
<dbReference type="InterPro" id="IPR035992">
    <property type="entry name" value="Ricin_B-like_lectins"/>
</dbReference>
<dbReference type="InterPro" id="IPR000772">
    <property type="entry name" value="Ricin_B_lectin"/>
</dbReference>
<dbReference type="Pfam" id="PF07968">
    <property type="entry name" value="Leukocidin"/>
    <property type="match status" value="1"/>
</dbReference>
<dbReference type="Pfam" id="PF00652">
    <property type="entry name" value="Ricin_B_lectin"/>
    <property type="match status" value="1"/>
</dbReference>
<dbReference type="SMART" id="SM00458">
    <property type="entry name" value="RICIN"/>
    <property type="match status" value="1"/>
</dbReference>
<dbReference type="SUPFAM" id="SSF56959">
    <property type="entry name" value="Leukocidin-like"/>
    <property type="match status" value="1"/>
</dbReference>
<dbReference type="SUPFAM" id="SSF50370">
    <property type="entry name" value="Ricin B-like lectins"/>
    <property type="match status" value="1"/>
</dbReference>
<dbReference type="PROSITE" id="PS50231">
    <property type="entry name" value="RICIN_B_LECTIN"/>
    <property type="match status" value="1"/>
</dbReference>
<comment type="function">
    <text>Bacterial hemolysins are exotoxins that attack blood cell membranes and cause cell rupture by mechanisms not clearly defined.</text>
</comment>
<comment type="similarity">
    <text evidence="2">Belongs to the HlyA hemolysin family.</text>
</comment>
<accession>P19247</accession>
<sequence length="471" mass="52899">MKKMTLFTLSLLATAVQVGAQEYVPIVEKPIYITSSKIKCVLHTSGDFNATRDWCNAGASIDVRVNVAQMRSVQSATSDGFTPDAKIVRFTVDADKPGTGIHLVNELQQDHSWFQSWANRRTYIGPFASSYDLWVKPVSGYTPKKARDLPQNENKNYQHRDTYGYSIGINGKVGAEVNKDGPKVGGEVSGSFTYNYSKTLVFDTKDYRINNRSSLSDFDISFEREFGECDELRRQELGCYFTAAHWGSGWVFDKTKFNPISYSNFKPNYDVLYEAPVSETGVTDFEMGVKLNYRARFGTVLPSALFSVYGSAGSSTNSSTVKQRIRIDWNHPLFEAEAHVTLQSLSNNDLCLDVYGENGDKTVAGGSVNGWSCHGSWNQVWGLDKEERYRSRVASDRCLTVNADKTLTVEQCGANLAQKWYWEGDKLISRYVDGNNTRYLLNIVGGRNVQVTPENEANQARWKPTLQQVKL</sequence>
<reference key="1">
    <citation type="journal article" date="1990" name="Infect. Immun.">
        <title>The cytolysin gene of Vibrio vulnificus: sequence and relationship to the Vibrio cholerae E1 Tor hemolysin gene.</title>
        <authorList>
            <person name="Yamamoto K."/>
            <person name="Wright A.C."/>
            <person name="Kaper J.B."/>
            <person name="Morris J.G. Jr."/>
        </authorList>
    </citation>
    <scope>NUCLEOTIDE SEQUENCE [GENOMIC DNA]</scope>
</reference>
<reference key="2">
    <citation type="submission" date="2002-12" db="EMBL/GenBank/DDBJ databases">
        <title>Complete genome sequence of Vibrio vulnificus CMCP6.</title>
        <authorList>
            <person name="Rhee J.H."/>
            <person name="Kim S.Y."/>
            <person name="Chung S.S."/>
            <person name="Kim J.J."/>
            <person name="Moon Y.H."/>
            <person name="Jeong H."/>
            <person name="Choy H.E."/>
        </authorList>
    </citation>
    <scope>NUCLEOTIDE SEQUENCE [LARGE SCALE GENOMIC DNA]</scope>
    <source>
        <strain>CMCP6</strain>
    </source>
</reference>
<evidence type="ECO:0000255" key="1">
    <source>
        <dbReference type="PROSITE-ProRule" id="PRU00174"/>
    </source>
</evidence>
<evidence type="ECO:0000305" key="2"/>
<evidence type="ECO:0007829" key="3">
    <source>
        <dbReference type="PDB" id="4OWJ"/>
    </source>
</evidence>
<evidence type="ECO:0007829" key="4">
    <source>
        <dbReference type="PDB" id="4OWL"/>
    </source>
</evidence>
<keyword id="KW-0002">3D-structure</keyword>
<keyword id="KW-0204">Cytolysis</keyword>
<keyword id="KW-0354">Hemolysis</keyword>
<keyword id="KW-0430">Lectin</keyword>
<keyword id="KW-0732">Signal</keyword>
<keyword id="KW-0800">Toxin</keyword>
<keyword id="KW-0843">Virulence</keyword>
<name>VVHA_VIBVU</name>
<protein>
    <recommendedName>
        <fullName>Cytolysin</fullName>
    </recommendedName>
</protein>
<gene>
    <name type="primary">vvhA</name>
    <name type="ordered locus">VV2_0404</name>
</gene>